<sequence>MFNTRLAIFLLLIVVSLSQAKESQPFDFFEGTYDDFIDCLRINNITIEEYEKFDDTDNLDNVLKENVELKHKCNIKCQLEREPTKWLNARGEVDLKSMKATSETAVSISKCMEKAPQETCAYVYKLVICAFKSGHSVIKFDSYEQIQEETAGLIAEQQADLFDYDTIDL</sequence>
<comment type="function">
    <text evidence="4">Present in the aqueous fluid surrounding olfactory sensory dendrites and are thought to aid in the capture and transport of hydrophobic odorants into and through this fluid.</text>
</comment>
<comment type="similarity">
    <text evidence="2">Belongs to the PBP/GOBP family.</text>
</comment>
<feature type="signal peptide" evidence="2">
    <location>
        <begin position="1"/>
        <end position="20"/>
    </location>
</feature>
<feature type="chain" id="PRO_0000012572" description="General odorant-binding protein 57a" evidence="2">
    <location>
        <begin position="21"/>
        <end position="169"/>
    </location>
</feature>
<feature type="disulfide bond" evidence="1">
    <location>
        <begin position="39"/>
        <end position="77"/>
    </location>
</feature>
<feature type="disulfide bond" evidence="1">
    <location>
        <begin position="73"/>
        <end position="120"/>
    </location>
</feature>
<feature type="disulfide bond" evidence="1">
    <location>
        <begin position="111"/>
        <end position="129"/>
    </location>
</feature>
<name>OB57A_DROME</name>
<gene>
    <name evidence="5" type="primary">Obp57a</name>
    <name type="ORF">CG30141</name>
</gene>
<dbReference type="EMBL" id="AF457148">
    <property type="protein sequence ID" value="AAM69286.1"/>
    <property type="molecule type" value="mRNA"/>
</dbReference>
<dbReference type="EMBL" id="AE013599">
    <property type="protein sequence ID" value="AAM68410.1"/>
    <property type="molecule type" value="Genomic_DNA"/>
</dbReference>
<dbReference type="EMBL" id="BT023329">
    <property type="protein sequence ID" value="AAY55745.1"/>
    <property type="molecule type" value="mRNA"/>
</dbReference>
<dbReference type="RefSeq" id="NP_725966.1">
    <property type="nucleotide sequence ID" value="NM_166395.3"/>
</dbReference>
<dbReference type="BioGRID" id="73206">
    <property type="interactions" value="1"/>
</dbReference>
<dbReference type="FunCoup" id="Q8MKK0">
    <property type="interactions" value="6"/>
</dbReference>
<dbReference type="STRING" id="7227.FBpp0085606"/>
<dbReference type="PaxDb" id="7227-FBpp0085606"/>
<dbReference type="DNASU" id="246670"/>
<dbReference type="EnsemblMetazoa" id="FBtr0086294">
    <property type="protein sequence ID" value="FBpp0085606"/>
    <property type="gene ID" value="FBgn0043535"/>
</dbReference>
<dbReference type="GeneID" id="246670"/>
<dbReference type="KEGG" id="dme:Dmel_CG30141"/>
<dbReference type="AGR" id="FB:FBgn0043535"/>
<dbReference type="CTD" id="246670"/>
<dbReference type="FlyBase" id="FBgn0043535">
    <property type="gene designation" value="Obp57a"/>
</dbReference>
<dbReference type="VEuPathDB" id="VectorBase:FBgn0043535"/>
<dbReference type="GeneTree" id="ENSGT00540000073618"/>
<dbReference type="HOGENOM" id="CLU_1588250_0_0_1"/>
<dbReference type="InParanoid" id="Q8MKK0"/>
<dbReference type="OMA" id="CAFKSGH"/>
<dbReference type="OrthoDB" id="7820309at2759"/>
<dbReference type="PhylomeDB" id="Q8MKK0"/>
<dbReference type="BioGRID-ORCS" id="246670">
    <property type="hits" value="0 hits in 1 CRISPR screen"/>
</dbReference>
<dbReference type="GenomeRNAi" id="246670"/>
<dbReference type="PRO" id="PR:Q8MKK0"/>
<dbReference type="Proteomes" id="UP000000803">
    <property type="component" value="Chromosome 2R"/>
</dbReference>
<dbReference type="Bgee" id="FBgn0043535">
    <property type="expression patterns" value="Expressed in spermathecum and 82 other cell types or tissues"/>
</dbReference>
<dbReference type="GO" id="GO:0005576">
    <property type="term" value="C:extracellular region"/>
    <property type="evidence" value="ECO:0000255"/>
    <property type="project" value="FlyBase"/>
</dbReference>
<dbReference type="GO" id="GO:0005549">
    <property type="term" value="F:odorant binding"/>
    <property type="evidence" value="ECO:0000250"/>
    <property type="project" value="FlyBase"/>
</dbReference>
<dbReference type="GO" id="GO:1990834">
    <property type="term" value="P:response to odorant"/>
    <property type="evidence" value="ECO:0000303"/>
    <property type="project" value="UniProtKB"/>
</dbReference>
<dbReference type="GO" id="GO:0007606">
    <property type="term" value="P:sensory perception of chemical stimulus"/>
    <property type="evidence" value="ECO:0000250"/>
    <property type="project" value="FlyBase"/>
</dbReference>
<dbReference type="GO" id="GO:0007608">
    <property type="term" value="P:sensory perception of smell"/>
    <property type="evidence" value="ECO:0007669"/>
    <property type="project" value="UniProtKB-KW"/>
</dbReference>
<dbReference type="Gene3D" id="1.10.238.20">
    <property type="entry name" value="Pheromone/general odorant binding protein domain"/>
    <property type="match status" value="1"/>
</dbReference>
<dbReference type="InterPro" id="IPR036728">
    <property type="entry name" value="PBP_GOBP_sf"/>
</dbReference>
<dbReference type="SUPFAM" id="SSF47565">
    <property type="entry name" value="Insect pheromone/odorant-binding proteins"/>
    <property type="match status" value="1"/>
</dbReference>
<organism>
    <name type="scientific">Drosophila melanogaster</name>
    <name type="common">Fruit fly</name>
    <dbReference type="NCBI Taxonomy" id="7227"/>
    <lineage>
        <taxon>Eukaryota</taxon>
        <taxon>Metazoa</taxon>
        <taxon>Ecdysozoa</taxon>
        <taxon>Arthropoda</taxon>
        <taxon>Hexapoda</taxon>
        <taxon>Insecta</taxon>
        <taxon>Pterygota</taxon>
        <taxon>Neoptera</taxon>
        <taxon>Endopterygota</taxon>
        <taxon>Diptera</taxon>
        <taxon>Brachycera</taxon>
        <taxon>Muscomorpha</taxon>
        <taxon>Ephydroidea</taxon>
        <taxon>Drosophilidae</taxon>
        <taxon>Drosophila</taxon>
        <taxon>Sophophora</taxon>
    </lineage>
</organism>
<protein>
    <recommendedName>
        <fullName>General odorant-binding protein 57a</fullName>
    </recommendedName>
</protein>
<proteinExistence type="evidence at transcript level"/>
<evidence type="ECO:0000250" key="1"/>
<evidence type="ECO:0000255" key="2"/>
<evidence type="ECO:0000269" key="3">
    <source>
    </source>
</evidence>
<evidence type="ECO:0000305" key="4"/>
<evidence type="ECO:0000312" key="5">
    <source>
        <dbReference type="EMBL" id="AAM68410.1"/>
    </source>
</evidence>
<evidence type="ECO:0000312" key="6">
    <source>
        <dbReference type="EMBL" id="AAM69286.1"/>
    </source>
</evidence>
<reference evidence="6" key="1">
    <citation type="journal article" date="2002" name="Gene">
        <title>The odorant-binding proteins of Drosophila melanogaster: annotation and characterization of a divergent gene family.</title>
        <authorList>
            <person name="Graham L.A."/>
            <person name="Davies P.L."/>
        </authorList>
    </citation>
    <scope>NUCLEOTIDE SEQUENCE [MRNA]</scope>
    <source>
        <strain evidence="6">Canton-S</strain>
    </source>
</reference>
<reference evidence="4 5" key="2">
    <citation type="journal article" date="2000" name="Science">
        <title>The genome sequence of Drosophila melanogaster.</title>
        <authorList>
            <person name="Adams M.D."/>
            <person name="Celniker S.E."/>
            <person name="Holt R.A."/>
            <person name="Evans C.A."/>
            <person name="Gocayne J.D."/>
            <person name="Amanatides P.G."/>
            <person name="Scherer S.E."/>
            <person name="Li P.W."/>
            <person name="Hoskins R.A."/>
            <person name="Galle R.F."/>
            <person name="George R.A."/>
            <person name="Lewis S.E."/>
            <person name="Richards S."/>
            <person name="Ashburner M."/>
            <person name="Henderson S.N."/>
            <person name="Sutton G.G."/>
            <person name="Wortman J.R."/>
            <person name="Yandell M.D."/>
            <person name="Zhang Q."/>
            <person name="Chen L.X."/>
            <person name="Brandon R.C."/>
            <person name="Rogers Y.-H.C."/>
            <person name="Blazej R.G."/>
            <person name="Champe M."/>
            <person name="Pfeiffer B.D."/>
            <person name="Wan K.H."/>
            <person name="Doyle C."/>
            <person name="Baxter E.G."/>
            <person name="Helt G."/>
            <person name="Nelson C.R."/>
            <person name="Miklos G.L.G."/>
            <person name="Abril J.F."/>
            <person name="Agbayani A."/>
            <person name="An H.-J."/>
            <person name="Andrews-Pfannkoch C."/>
            <person name="Baldwin D."/>
            <person name="Ballew R.M."/>
            <person name="Basu A."/>
            <person name="Baxendale J."/>
            <person name="Bayraktaroglu L."/>
            <person name="Beasley E.M."/>
            <person name="Beeson K.Y."/>
            <person name="Benos P.V."/>
            <person name="Berman B.P."/>
            <person name="Bhandari D."/>
            <person name="Bolshakov S."/>
            <person name="Borkova D."/>
            <person name="Botchan M.R."/>
            <person name="Bouck J."/>
            <person name="Brokstein P."/>
            <person name="Brottier P."/>
            <person name="Burtis K.C."/>
            <person name="Busam D.A."/>
            <person name="Butler H."/>
            <person name="Cadieu E."/>
            <person name="Center A."/>
            <person name="Chandra I."/>
            <person name="Cherry J.M."/>
            <person name="Cawley S."/>
            <person name="Dahlke C."/>
            <person name="Davenport L.B."/>
            <person name="Davies P."/>
            <person name="de Pablos B."/>
            <person name="Delcher A."/>
            <person name="Deng Z."/>
            <person name="Mays A.D."/>
            <person name="Dew I."/>
            <person name="Dietz S.M."/>
            <person name="Dodson K."/>
            <person name="Doup L.E."/>
            <person name="Downes M."/>
            <person name="Dugan-Rocha S."/>
            <person name="Dunkov B.C."/>
            <person name="Dunn P."/>
            <person name="Durbin K.J."/>
            <person name="Evangelista C.C."/>
            <person name="Ferraz C."/>
            <person name="Ferriera S."/>
            <person name="Fleischmann W."/>
            <person name="Fosler C."/>
            <person name="Gabrielian A.E."/>
            <person name="Garg N.S."/>
            <person name="Gelbart W.M."/>
            <person name="Glasser K."/>
            <person name="Glodek A."/>
            <person name="Gong F."/>
            <person name="Gorrell J.H."/>
            <person name="Gu Z."/>
            <person name="Guan P."/>
            <person name="Harris M."/>
            <person name="Harris N.L."/>
            <person name="Harvey D.A."/>
            <person name="Heiman T.J."/>
            <person name="Hernandez J.R."/>
            <person name="Houck J."/>
            <person name="Hostin D."/>
            <person name="Houston K.A."/>
            <person name="Howland T.J."/>
            <person name="Wei M.-H."/>
            <person name="Ibegwam C."/>
            <person name="Jalali M."/>
            <person name="Kalush F."/>
            <person name="Karpen G.H."/>
            <person name="Ke Z."/>
            <person name="Kennison J.A."/>
            <person name="Ketchum K.A."/>
            <person name="Kimmel B.E."/>
            <person name="Kodira C.D."/>
            <person name="Kraft C.L."/>
            <person name="Kravitz S."/>
            <person name="Kulp D."/>
            <person name="Lai Z."/>
            <person name="Lasko P."/>
            <person name="Lei Y."/>
            <person name="Levitsky A.A."/>
            <person name="Li J.H."/>
            <person name="Li Z."/>
            <person name="Liang Y."/>
            <person name="Lin X."/>
            <person name="Liu X."/>
            <person name="Mattei B."/>
            <person name="McIntosh T.C."/>
            <person name="McLeod M.P."/>
            <person name="McPherson D."/>
            <person name="Merkulov G."/>
            <person name="Milshina N.V."/>
            <person name="Mobarry C."/>
            <person name="Morris J."/>
            <person name="Moshrefi A."/>
            <person name="Mount S.M."/>
            <person name="Moy M."/>
            <person name="Murphy B."/>
            <person name="Murphy L."/>
            <person name="Muzny D.M."/>
            <person name="Nelson D.L."/>
            <person name="Nelson D.R."/>
            <person name="Nelson K.A."/>
            <person name="Nixon K."/>
            <person name="Nusskern D.R."/>
            <person name="Pacleb J.M."/>
            <person name="Palazzolo M."/>
            <person name="Pittman G.S."/>
            <person name="Pan S."/>
            <person name="Pollard J."/>
            <person name="Puri V."/>
            <person name="Reese M.G."/>
            <person name="Reinert K."/>
            <person name="Remington K."/>
            <person name="Saunders R.D.C."/>
            <person name="Scheeler F."/>
            <person name="Shen H."/>
            <person name="Shue B.C."/>
            <person name="Siden-Kiamos I."/>
            <person name="Simpson M."/>
            <person name="Skupski M.P."/>
            <person name="Smith T.J."/>
            <person name="Spier E."/>
            <person name="Spradling A.C."/>
            <person name="Stapleton M."/>
            <person name="Strong R."/>
            <person name="Sun E."/>
            <person name="Svirskas R."/>
            <person name="Tector C."/>
            <person name="Turner R."/>
            <person name="Venter E."/>
            <person name="Wang A.H."/>
            <person name="Wang X."/>
            <person name="Wang Z.-Y."/>
            <person name="Wassarman D.A."/>
            <person name="Weinstock G.M."/>
            <person name="Weissenbach J."/>
            <person name="Williams S.M."/>
            <person name="Woodage T."/>
            <person name="Worley K.C."/>
            <person name="Wu D."/>
            <person name="Yang S."/>
            <person name="Yao Q.A."/>
            <person name="Ye J."/>
            <person name="Yeh R.-F."/>
            <person name="Zaveri J.S."/>
            <person name="Zhan M."/>
            <person name="Zhang G."/>
            <person name="Zhao Q."/>
            <person name="Zheng L."/>
            <person name="Zheng X.H."/>
            <person name="Zhong F.N."/>
            <person name="Zhong W."/>
            <person name="Zhou X."/>
            <person name="Zhu S.C."/>
            <person name="Zhu X."/>
            <person name="Smith H.O."/>
            <person name="Gibbs R.A."/>
            <person name="Myers E.W."/>
            <person name="Rubin G.M."/>
            <person name="Venter J.C."/>
        </authorList>
    </citation>
    <scope>NUCLEOTIDE SEQUENCE [LARGE SCALE GENOMIC DNA]</scope>
    <source>
        <strain evidence="3">Berkeley</strain>
    </source>
</reference>
<reference evidence="4 5" key="3">
    <citation type="journal article" date="2002" name="Genome Biol.">
        <title>Annotation of the Drosophila melanogaster euchromatic genome: a systematic review.</title>
        <authorList>
            <person name="Misra S."/>
            <person name="Crosby M.A."/>
            <person name="Mungall C.J."/>
            <person name="Matthews B.B."/>
            <person name="Campbell K.S."/>
            <person name="Hradecky P."/>
            <person name="Huang Y."/>
            <person name="Kaminker J.S."/>
            <person name="Millburn G.H."/>
            <person name="Prochnik S.E."/>
            <person name="Smith C.D."/>
            <person name="Tupy J.L."/>
            <person name="Whitfield E.J."/>
            <person name="Bayraktaroglu L."/>
            <person name="Berman B.P."/>
            <person name="Bettencourt B.R."/>
            <person name="Celniker S.E."/>
            <person name="de Grey A.D.N.J."/>
            <person name="Drysdale R.A."/>
            <person name="Harris N.L."/>
            <person name="Richter J."/>
            <person name="Russo S."/>
            <person name="Schroeder A.J."/>
            <person name="Shu S.Q."/>
            <person name="Stapleton M."/>
            <person name="Yamada C."/>
            <person name="Ashburner M."/>
            <person name="Gelbart W.M."/>
            <person name="Rubin G.M."/>
            <person name="Lewis S.E."/>
        </authorList>
    </citation>
    <scope>GENOME REANNOTATION</scope>
    <source>
        <strain>Berkeley</strain>
    </source>
</reference>
<reference key="4">
    <citation type="submission" date="2005-05" db="EMBL/GenBank/DDBJ databases">
        <authorList>
            <person name="Stapleton M."/>
            <person name="Carlson J.W."/>
            <person name="Chavez C."/>
            <person name="Frise E."/>
            <person name="George R.A."/>
            <person name="Pacleb J.M."/>
            <person name="Park S."/>
            <person name="Wan K.H."/>
            <person name="Yu C."/>
            <person name="Celniker S.E."/>
        </authorList>
    </citation>
    <scope>NUCLEOTIDE SEQUENCE [LARGE SCALE MRNA]</scope>
    <source>
        <strain>Berkeley</strain>
    </source>
</reference>
<reference evidence="4" key="5">
    <citation type="journal article" date="2002" name="Genome Res.">
        <title>Genome-wide analysis of the odorant-binding protein gene family in Drosophila melanogaster.</title>
        <authorList>
            <person name="Hekmat-Scafe D.S."/>
            <person name="Scafe C.R."/>
            <person name="McKinney A.J."/>
            <person name="Tanouye M.A."/>
        </authorList>
    </citation>
    <scope>IDENTIFICATION</scope>
</reference>
<keyword id="KW-1015">Disulfide bond</keyword>
<keyword id="KW-0552">Olfaction</keyword>
<keyword id="KW-1185">Reference proteome</keyword>
<keyword id="KW-0716">Sensory transduction</keyword>
<keyword id="KW-0732">Signal</keyword>
<keyword id="KW-0813">Transport</keyword>
<accession>Q8MKK0</accession>
<accession>Q4V3M7</accession>